<evidence type="ECO:0000255" key="1">
    <source>
        <dbReference type="HAMAP-Rule" id="MF_00101"/>
    </source>
</evidence>
<accession>B7JLE6</accession>
<dbReference type="EC" id="2.7.8.7" evidence="1"/>
<dbReference type="EMBL" id="CP001283">
    <property type="protein sequence ID" value="ACK87437.1"/>
    <property type="molecule type" value="Genomic_DNA"/>
</dbReference>
<dbReference type="RefSeq" id="WP_000635040.1">
    <property type="nucleotide sequence ID" value="NC_011773.1"/>
</dbReference>
<dbReference type="SMR" id="B7JLE6"/>
<dbReference type="GeneID" id="45020288"/>
<dbReference type="KEGG" id="bcu:BCAH820_0262"/>
<dbReference type="HOGENOM" id="CLU_089696_1_2_9"/>
<dbReference type="Proteomes" id="UP000001363">
    <property type="component" value="Chromosome"/>
</dbReference>
<dbReference type="GO" id="GO:0005829">
    <property type="term" value="C:cytosol"/>
    <property type="evidence" value="ECO:0007669"/>
    <property type="project" value="TreeGrafter"/>
</dbReference>
<dbReference type="GO" id="GO:0008897">
    <property type="term" value="F:holo-[acyl-carrier-protein] synthase activity"/>
    <property type="evidence" value="ECO:0007669"/>
    <property type="project" value="UniProtKB-UniRule"/>
</dbReference>
<dbReference type="GO" id="GO:0000287">
    <property type="term" value="F:magnesium ion binding"/>
    <property type="evidence" value="ECO:0007669"/>
    <property type="project" value="UniProtKB-UniRule"/>
</dbReference>
<dbReference type="GO" id="GO:0006633">
    <property type="term" value="P:fatty acid biosynthetic process"/>
    <property type="evidence" value="ECO:0007669"/>
    <property type="project" value="UniProtKB-UniRule"/>
</dbReference>
<dbReference type="GO" id="GO:0019878">
    <property type="term" value="P:lysine biosynthetic process via aminoadipic acid"/>
    <property type="evidence" value="ECO:0007669"/>
    <property type="project" value="TreeGrafter"/>
</dbReference>
<dbReference type="Gene3D" id="3.90.470.20">
    <property type="entry name" value="4'-phosphopantetheinyl transferase domain"/>
    <property type="match status" value="1"/>
</dbReference>
<dbReference type="HAMAP" id="MF_00101">
    <property type="entry name" value="AcpS"/>
    <property type="match status" value="1"/>
</dbReference>
<dbReference type="InterPro" id="IPR008278">
    <property type="entry name" value="4-PPantetheinyl_Trfase_dom"/>
</dbReference>
<dbReference type="InterPro" id="IPR037143">
    <property type="entry name" value="4-PPantetheinyl_Trfase_dom_sf"/>
</dbReference>
<dbReference type="InterPro" id="IPR002582">
    <property type="entry name" value="ACPS"/>
</dbReference>
<dbReference type="InterPro" id="IPR050559">
    <property type="entry name" value="P-Pant_transferase_sf"/>
</dbReference>
<dbReference type="InterPro" id="IPR004568">
    <property type="entry name" value="Ppantetheine-prot_Trfase_dom"/>
</dbReference>
<dbReference type="NCBIfam" id="TIGR00516">
    <property type="entry name" value="acpS"/>
    <property type="match status" value="1"/>
</dbReference>
<dbReference type="NCBIfam" id="TIGR00556">
    <property type="entry name" value="pantethn_trn"/>
    <property type="match status" value="1"/>
</dbReference>
<dbReference type="PANTHER" id="PTHR12215:SF10">
    <property type="entry name" value="L-AMINOADIPATE-SEMIALDEHYDE DEHYDROGENASE-PHOSPHOPANTETHEINYL TRANSFERASE"/>
    <property type="match status" value="1"/>
</dbReference>
<dbReference type="PANTHER" id="PTHR12215">
    <property type="entry name" value="PHOSPHOPANTETHEINE TRANSFERASE"/>
    <property type="match status" value="1"/>
</dbReference>
<dbReference type="Pfam" id="PF01648">
    <property type="entry name" value="ACPS"/>
    <property type="match status" value="1"/>
</dbReference>
<dbReference type="SUPFAM" id="SSF56214">
    <property type="entry name" value="4'-phosphopantetheinyl transferase"/>
    <property type="match status" value="1"/>
</dbReference>
<protein>
    <recommendedName>
        <fullName evidence="1">Holo-[acyl-carrier-protein] synthase</fullName>
        <shortName evidence="1">Holo-ACP synthase</shortName>
        <ecNumber evidence="1">2.7.8.7</ecNumber>
    </recommendedName>
    <alternativeName>
        <fullName evidence="1">4'-phosphopantetheinyl transferase AcpS</fullName>
    </alternativeName>
</protein>
<name>ACPS_BACC0</name>
<keyword id="KW-0963">Cytoplasm</keyword>
<keyword id="KW-0275">Fatty acid biosynthesis</keyword>
<keyword id="KW-0276">Fatty acid metabolism</keyword>
<keyword id="KW-0444">Lipid biosynthesis</keyword>
<keyword id="KW-0443">Lipid metabolism</keyword>
<keyword id="KW-0460">Magnesium</keyword>
<keyword id="KW-0479">Metal-binding</keyword>
<keyword id="KW-0808">Transferase</keyword>
<comment type="function">
    <text evidence="1">Transfers the 4'-phosphopantetheine moiety from coenzyme A to a Ser of acyl-carrier-protein.</text>
</comment>
<comment type="catalytic activity">
    <reaction evidence="1">
        <text>apo-[ACP] + CoA = holo-[ACP] + adenosine 3',5'-bisphosphate + H(+)</text>
        <dbReference type="Rhea" id="RHEA:12068"/>
        <dbReference type="Rhea" id="RHEA-COMP:9685"/>
        <dbReference type="Rhea" id="RHEA-COMP:9690"/>
        <dbReference type="ChEBI" id="CHEBI:15378"/>
        <dbReference type="ChEBI" id="CHEBI:29999"/>
        <dbReference type="ChEBI" id="CHEBI:57287"/>
        <dbReference type="ChEBI" id="CHEBI:58343"/>
        <dbReference type="ChEBI" id="CHEBI:64479"/>
        <dbReference type="EC" id="2.7.8.7"/>
    </reaction>
</comment>
<comment type="cofactor">
    <cofactor evidence="1">
        <name>Mg(2+)</name>
        <dbReference type="ChEBI" id="CHEBI:18420"/>
    </cofactor>
</comment>
<comment type="subcellular location">
    <subcellularLocation>
        <location evidence="1">Cytoplasm</location>
    </subcellularLocation>
</comment>
<comment type="similarity">
    <text evidence="1">Belongs to the P-Pant transferase superfamily. AcpS family.</text>
</comment>
<reference key="1">
    <citation type="submission" date="2008-10" db="EMBL/GenBank/DDBJ databases">
        <title>Genome sequence of Bacillus cereus AH820.</title>
        <authorList>
            <person name="Dodson R.J."/>
            <person name="Durkin A.S."/>
            <person name="Rosovitz M.J."/>
            <person name="Rasko D.A."/>
            <person name="Hoffmaster A."/>
            <person name="Ravel J."/>
            <person name="Sutton G."/>
        </authorList>
    </citation>
    <scope>NUCLEOTIDE SEQUENCE [LARGE SCALE GENOMIC DNA]</scope>
    <source>
        <strain>AH820</strain>
    </source>
</reference>
<proteinExistence type="inferred from homology"/>
<feature type="chain" id="PRO_1000117341" description="Holo-[acyl-carrier-protein] synthase">
    <location>
        <begin position="1"/>
        <end position="119"/>
    </location>
</feature>
<feature type="binding site" evidence="1">
    <location>
        <position position="8"/>
    </location>
    <ligand>
        <name>Mg(2+)</name>
        <dbReference type="ChEBI" id="CHEBI:18420"/>
    </ligand>
</feature>
<feature type="binding site" evidence="1">
    <location>
        <position position="58"/>
    </location>
    <ligand>
        <name>Mg(2+)</name>
        <dbReference type="ChEBI" id="CHEBI:18420"/>
    </ligand>
</feature>
<organism>
    <name type="scientific">Bacillus cereus (strain AH820)</name>
    <dbReference type="NCBI Taxonomy" id="405535"/>
    <lineage>
        <taxon>Bacteria</taxon>
        <taxon>Bacillati</taxon>
        <taxon>Bacillota</taxon>
        <taxon>Bacilli</taxon>
        <taxon>Bacillales</taxon>
        <taxon>Bacillaceae</taxon>
        <taxon>Bacillus</taxon>
        <taxon>Bacillus cereus group</taxon>
    </lineage>
</organism>
<sequence length="119" mass="13100">MIVGIGIDIIELNRIEKMLDGKLKFMERILTENERNVAKGLKGSRLTEFVAGRFAAKEAYSKAVGTGIGKEVSFLDIEVRNDDRGKPILITSTEHIVHLSISHSKEFAVAQVVLESSSS</sequence>
<gene>
    <name evidence="1" type="primary">acpS</name>
    <name type="ordered locus">BCAH820_0262</name>
</gene>